<sequence length="603" mass="69792">MKEALTSLFEKVTKLPTTSGCYKMLNENKKILYIGKAKNLRSRIKSYFLEKKSHKIKILMKNVKSIEVITTNSEYEALLLECNLIKTHKPDYNVKLKDGKGYPMIRITHEKYPRILKTRKIINDQSEYFGPFTNVKKLDQVLDFINKTFKIRKCKKKSNAPCLYYHMGQCLGVCYKENLEKEYQIEVNKAKSILNGNISEILSQIDIKLKLAVQKEDFETAIKLKEMKSSLIEINQIQIVTKANNLNIDYVYVHPGENVNTIIVLKYRDGKLVERDANFDESICKKDELVLQFLIQYYTSINMIVPDKIHIFLKDVDTKNVEKLINEIKNTKTEIIYKETKEILKIMEMAISNAKLSLREYENKSNKALESLKIFLEMDKLPKIIEGFDIAHLKGQETVASMVTFKMGIPFKENYKLYKLNSLLKGEIDDFRAIKEAILRRYSEIINKKLELPNLILIDGGKGQLSAAFSILKSLKIEDKVKVCSLAKKHETIFLITNKKGINLPQGHPALRILQNVRDEAHRKANGFNKKRREKITLLYKKIDGVGEKTAQKILKLIGTYKDILPLSENEISEKIKVNIKLAKRIKEFAIKENSIKNIDNDK</sequence>
<organism>
    <name type="scientific">Borrelia garinii subsp. bavariensis (strain ATCC BAA-2496 / DSM 23469 / PBi)</name>
    <name type="common">Borreliella bavariensis</name>
    <dbReference type="NCBI Taxonomy" id="290434"/>
    <lineage>
        <taxon>Bacteria</taxon>
        <taxon>Pseudomonadati</taxon>
        <taxon>Spirochaetota</taxon>
        <taxon>Spirochaetia</taxon>
        <taxon>Spirochaetales</taxon>
        <taxon>Borreliaceae</taxon>
        <taxon>Borreliella</taxon>
    </lineage>
</organism>
<name>UVRC_BORGP</name>
<protein>
    <recommendedName>
        <fullName evidence="1">UvrABC system protein C</fullName>
        <shortName evidence="1">Protein UvrC</shortName>
    </recommendedName>
    <alternativeName>
        <fullName evidence="1">Excinuclease ABC subunit C</fullName>
    </alternativeName>
</protein>
<keyword id="KW-0963">Cytoplasm</keyword>
<keyword id="KW-0227">DNA damage</keyword>
<keyword id="KW-0228">DNA excision</keyword>
<keyword id="KW-0234">DNA repair</keyword>
<keyword id="KW-0267">Excision nuclease</keyword>
<keyword id="KW-0742">SOS response</keyword>
<evidence type="ECO:0000255" key="1">
    <source>
        <dbReference type="HAMAP-Rule" id="MF_00203"/>
    </source>
</evidence>
<evidence type="ECO:0000305" key="2"/>
<reference key="1">
    <citation type="journal article" date="2004" name="Nucleic Acids Res.">
        <title>Comparative analysis of the Borrelia garinii genome.</title>
        <authorList>
            <person name="Gloeckner G."/>
            <person name="Lehmann R."/>
            <person name="Romualdi A."/>
            <person name="Pradella S."/>
            <person name="Schulte-Spechtel U."/>
            <person name="Schilhabel M."/>
            <person name="Wilske B."/>
            <person name="Suehnel J."/>
            <person name="Platzer M."/>
        </authorList>
    </citation>
    <scope>NUCLEOTIDE SEQUENCE [LARGE SCALE GENOMIC DNA]</scope>
    <source>
        <strain>ATCC BAA-2496 / DSM 23469 / PBi</strain>
    </source>
</reference>
<comment type="function">
    <text evidence="1">The UvrABC repair system catalyzes the recognition and processing of DNA lesions. UvrC both incises the 5' and 3' sides of the lesion. The N-terminal half is responsible for the 3' incision and the C-terminal half is responsible for the 5' incision.</text>
</comment>
<comment type="subunit">
    <text evidence="1">Interacts with UvrB in an incision complex.</text>
</comment>
<comment type="subcellular location">
    <subcellularLocation>
        <location evidence="1">Cytoplasm</location>
    </subcellularLocation>
</comment>
<comment type="similarity">
    <text evidence="1">Belongs to the UvrC family.</text>
</comment>
<comment type="sequence caution" evidence="2">
    <conflict type="erroneous initiation">
        <sequence resource="EMBL-CDS" id="AAU07309"/>
    </conflict>
</comment>
<gene>
    <name evidence="1" type="primary">uvrC</name>
    <name type="ordered locus">BG0466</name>
</gene>
<feature type="chain" id="PRO_0000264874" description="UvrABC system protein C">
    <location>
        <begin position="1"/>
        <end position="603"/>
    </location>
</feature>
<feature type="domain" description="GIY-YIG" evidence="1">
    <location>
        <begin position="17"/>
        <end position="94"/>
    </location>
</feature>
<feature type="domain" description="UVR" evidence="1">
    <location>
        <begin position="199"/>
        <end position="234"/>
    </location>
</feature>
<proteinExistence type="inferred from homology"/>
<dbReference type="EMBL" id="CP000013">
    <property type="protein sequence ID" value="AAU07309.1"/>
    <property type="status" value="ALT_INIT"/>
    <property type="molecule type" value="Genomic_DNA"/>
</dbReference>
<dbReference type="RefSeq" id="WP_044007889.1">
    <property type="nucleotide sequence ID" value="NZ_CP028872.1"/>
</dbReference>
<dbReference type="SMR" id="Q661G2"/>
<dbReference type="GeneID" id="45161249"/>
<dbReference type="KEGG" id="bga:BG0466"/>
<dbReference type="eggNOG" id="COG0322">
    <property type="taxonomic scope" value="Bacteria"/>
</dbReference>
<dbReference type="HOGENOM" id="CLU_014841_3_2_12"/>
<dbReference type="OrthoDB" id="9804933at2"/>
<dbReference type="Proteomes" id="UP000002276">
    <property type="component" value="Chromosome"/>
</dbReference>
<dbReference type="GO" id="GO:0005737">
    <property type="term" value="C:cytoplasm"/>
    <property type="evidence" value="ECO:0007669"/>
    <property type="project" value="UniProtKB-SubCell"/>
</dbReference>
<dbReference type="GO" id="GO:0009380">
    <property type="term" value="C:excinuclease repair complex"/>
    <property type="evidence" value="ECO:0007669"/>
    <property type="project" value="InterPro"/>
</dbReference>
<dbReference type="GO" id="GO:0003677">
    <property type="term" value="F:DNA binding"/>
    <property type="evidence" value="ECO:0007669"/>
    <property type="project" value="UniProtKB-UniRule"/>
</dbReference>
<dbReference type="GO" id="GO:0009381">
    <property type="term" value="F:excinuclease ABC activity"/>
    <property type="evidence" value="ECO:0007669"/>
    <property type="project" value="UniProtKB-UniRule"/>
</dbReference>
<dbReference type="GO" id="GO:0006289">
    <property type="term" value="P:nucleotide-excision repair"/>
    <property type="evidence" value="ECO:0007669"/>
    <property type="project" value="UniProtKB-UniRule"/>
</dbReference>
<dbReference type="GO" id="GO:0009432">
    <property type="term" value="P:SOS response"/>
    <property type="evidence" value="ECO:0007669"/>
    <property type="project" value="UniProtKB-UniRule"/>
</dbReference>
<dbReference type="CDD" id="cd10434">
    <property type="entry name" value="GIY-YIG_UvrC_Cho"/>
    <property type="match status" value="1"/>
</dbReference>
<dbReference type="FunFam" id="3.40.1440.10:FF:000001">
    <property type="entry name" value="UvrABC system protein C"/>
    <property type="match status" value="1"/>
</dbReference>
<dbReference type="Gene3D" id="1.10.150.20">
    <property type="entry name" value="5' to 3' exonuclease, C-terminal subdomain"/>
    <property type="match status" value="1"/>
</dbReference>
<dbReference type="Gene3D" id="3.40.1440.10">
    <property type="entry name" value="GIY-YIG endonuclease"/>
    <property type="match status" value="1"/>
</dbReference>
<dbReference type="Gene3D" id="3.30.420.340">
    <property type="entry name" value="UvrC, RNAse H endonuclease domain"/>
    <property type="match status" value="1"/>
</dbReference>
<dbReference type="HAMAP" id="MF_00203">
    <property type="entry name" value="UvrC"/>
    <property type="match status" value="1"/>
</dbReference>
<dbReference type="InterPro" id="IPR000305">
    <property type="entry name" value="GIY-YIG_endonuc"/>
</dbReference>
<dbReference type="InterPro" id="IPR035901">
    <property type="entry name" value="GIY-YIG_endonuc_sf"/>
</dbReference>
<dbReference type="InterPro" id="IPR047296">
    <property type="entry name" value="GIY-YIG_UvrC_Cho"/>
</dbReference>
<dbReference type="InterPro" id="IPR010994">
    <property type="entry name" value="RuvA_2-like"/>
</dbReference>
<dbReference type="InterPro" id="IPR050066">
    <property type="entry name" value="UvrABC_protein_C"/>
</dbReference>
<dbReference type="InterPro" id="IPR004791">
    <property type="entry name" value="UvrC"/>
</dbReference>
<dbReference type="InterPro" id="IPR001162">
    <property type="entry name" value="UvrC_RNase_H_dom"/>
</dbReference>
<dbReference type="InterPro" id="IPR038476">
    <property type="entry name" value="UvrC_RNase_H_dom_sf"/>
</dbReference>
<dbReference type="NCBIfam" id="NF011264">
    <property type="entry name" value="PRK14670.1"/>
    <property type="match status" value="1"/>
</dbReference>
<dbReference type="NCBIfam" id="TIGR00194">
    <property type="entry name" value="uvrC"/>
    <property type="match status" value="1"/>
</dbReference>
<dbReference type="PANTHER" id="PTHR30562:SF1">
    <property type="entry name" value="UVRABC SYSTEM PROTEIN C"/>
    <property type="match status" value="1"/>
</dbReference>
<dbReference type="PANTHER" id="PTHR30562">
    <property type="entry name" value="UVRC/OXIDOREDUCTASE"/>
    <property type="match status" value="1"/>
</dbReference>
<dbReference type="Pfam" id="PF01541">
    <property type="entry name" value="GIY-YIG"/>
    <property type="match status" value="1"/>
</dbReference>
<dbReference type="Pfam" id="PF22920">
    <property type="entry name" value="UvrC_RNaseH"/>
    <property type="match status" value="1"/>
</dbReference>
<dbReference type="Pfam" id="PF08459">
    <property type="entry name" value="UvrC_RNaseH_dom"/>
    <property type="match status" value="1"/>
</dbReference>
<dbReference type="SMART" id="SM00465">
    <property type="entry name" value="GIYc"/>
    <property type="match status" value="1"/>
</dbReference>
<dbReference type="SUPFAM" id="SSF82771">
    <property type="entry name" value="GIY-YIG endonuclease"/>
    <property type="match status" value="1"/>
</dbReference>
<dbReference type="SUPFAM" id="SSF47781">
    <property type="entry name" value="RuvA domain 2-like"/>
    <property type="match status" value="1"/>
</dbReference>
<dbReference type="PROSITE" id="PS50164">
    <property type="entry name" value="GIY_YIG"/>
    <property type="match status" value="1"/>
</dbReference>
<dbReference type="PROSITE" id="PS50165">
    <property type="entry name" value="UVRC"/>
    <property type="match status" value="1"/>
</dbReference>
<accession>Q661G2</accession>